<comment type="function">
    <text evidence="1">Catalyzes the hydrolysis of the adenine ring of phosphoribosyl-AMP.</text>
</comment>
<comment type="catalytic activity">
    <reaction evidence="1">
        <text>1-(5-phospho-beta-D-ribosyl)-5'-AMP + H2O = 1-(5-phospho-beta-D-ribosyl)-5-[(5-phospho-beta-D-ribosylamino)methylideneamino]imidazole-4-carboxamide</text>
        <dbReference type="Rhea" id="RHEA:20049"/>
        <dbReference type="ChEBI" id="CHEBI:15377"/>
        <dbReference type="ChEBI" id="CHEBI:58435"/>
        <dbReference type="ChEBI" id="CHEBI:59457"/>
        <dbReference type="EC" id="3.5.4.19"/>
    </reaction>
</comment>
<comment type="cofactor">
    <cofactor evidence="1">
        <name>Mg(2+)</name>
        <dbReference type="ChEBI" id="CHEBI:18420"/>
    </cofactor>
    <text evidence="1">Binds 1 Mg(2+) ion per subunit.</text>
</comment>
<comment type="cofactor">
    <cofactor evidence="1">
        <name>Zn(2+)</name>
        <dbReference type="ChEBI" id="CHEBI:29105"/>
    </cofactor>
    <text evidence="1">Binds 1 zinc ion per subunit.</text>
</comment>
<comment type="pathway">
    <text evidence="1">Amino-acid biosynthesis; L-histidine biosynthesis; L-histidine from 5-phospho-alpha-D-ribose 1-diphosphate: step 3/9.</text>
</comment>
<comment type="subunit">
    <text evidence="1">Homodimer.</text>
</comment>
<comment type="subcellular location">
    <subcellularLocation>
        <location evidence="1">Cytoplasm</location>
    </subcellularLocation>
</comment>
<comment type="similarity">
    <text evidence="1">Belongs to the PRA-CH family.</text>
</comment>
<accession>A1KSN5</accession>
<reference key="1">
    <citation type="journal article" date="2007" name="PLoS Genet.">
        <title>Meningococcal genetic variation mechanisms viewed through comparative analysis of serogroup C strain FAM18.</title>
        <authorList>
            <person name="Bentley S.D."/>
            <person name="Vernikos G.S."/>
            <person name="Snyder L.A.S."/>
            <person name="Churcher C."/>
            <person name="Arrowsmith C."/>
            <person name="Chillingworth T."/>
            <person name="Cronin A."/>
            <person name="Davis P.H."/>
            <person name="Holroyd N.E."/>
            <person name="Jagels K."/>
            <person name="Maddison M."/>
            <person name="Moule S."/>
            <person name="Rabbinowitsch E."/>
            <person name="Sharp S."/>
            <person name="Unwin L."/>
            <person name="Whitehead S."/>
            <person name="Quail M.A."/>
            <person name="Achtman M."/>
            <person name="Barrell B.G."/>
            <person name="Saunders N.J."/>
            <person name="Parkhill J."/>
        </authorList>
    </citation>
    <scope>NUCLEOTIDE SEQUENCE [LARGE SCALE GENOMIC DNA]</scope>
    <source>
        <strain>ATCC 700532 / DSM 15464 / FAM18</strain>
    </source>
</reference>
<evidence type="ECO:0000255" key="1">
    <source>
        <dbReference type="HAMAP-Rule" id="MF_01021"/>
    </source>
</evidence>
<name>HIS3_NEIMF</name>
<dbReference type="EC" id="3.5.4.19" evidence="1"/>
<dbReference type="EMBL" id="AM421808">
    <property type="protein sequence ID" value="CAM09865.1"/>
    <property type="molecule type" value="Genomic_DNA"/>
</dbReference>
<dbReference type="RefSeq" id="WP_002214257.1">
    <property type="nucleotide sequence ID" value="NC_008767.1"/>
</dbReference>
<dbReference type="SMR" id="A1KSN5"/>
<dbReference type="GeneID" id="86929788"/>
<dbReference type="KEGG" id="nmc:NMC0571"/>
<dbReference type="HOGENOM" id="CLU_048577_5_0_4"/>
<dbReference type="UniPathway" id="UPA00031">
    <property type="reaction ID" value="UER00008"/>
</dbReference>
<dbReference type="Proteomes" id="UP000002286">
    <property type="component" value="Chromosome"/>
</dbReference>
<dbReference type="GO" id="GO:0005737">
    <property type="term" value="C:cytoplasm"/>
    <property type="evidence" value="ECO:0007669"/>
    <property type="project" value="UniProtKB-SubCell"/>
</dbReference>
<dbReference type="GO" id="GO:0000287">
    <property type="term" value="F:magnesium ion binding"/>
    <property type="evidence" value="ECO:0007669"/>
    <property type="project" value="UniProtKB-UniRule"/>
</dbReference>
<dbReference type="GO" id="GO:0004635">
    <property type="term" value="F:phosphoribosyl-AMP cyclohydrolase activity"/>
    <property type="evidence" value="ECO:0007669"/>
    <property type="project" value="UniProtKB-UniRule"/>
</dbReference>
<dbReference type="GO" id="GO:0008270">
    <property type="term" value="F:zinc ion binding"/>
    <property type="evidence" value="ECO:0007669"/>
    <property type="project" value="UniProtKB-UniRule"/>
</dbReference>
<dbReference type="GO" id="GO:0000105">
    <property type="term" value="P:L-histidine biosynthetic process"/>
    <property type="evidence" value="ECO:0007669"/>
    <property type="project" value="UniProtKB-UniRule"/>
</dbReference>
<dbReference type="FunFam" id="3.10.20.810:FF:000001">
    <property type="entry name" value="Histidine biosynthesis bifunctional protein HisIE"/>
    <property type="match status" value="1"/>
</dbReference>
<dbReference type="Gene3D" id="3.10.20.810">
    <property type="entry name" value="Phosphoribosyl-AMP cyclohydrolase"/>
    <property type="match status" value="1"/>
</dbReference>
<dbReference type="HAMAP" id="MF_01021">
    <property type="entry name" value="HisI"/>
    <property type="match status" value="1"/>
</dbReference>
<dbReference type="InterPro" id="IPR026660">
    <property type="entry name" value="PRA-CH"/>
</dbReference>
<dbReference type="InterPro" id="IPR002496">
    <property type="entry name" value="PRib_AMP_CycHydrolase_dom"/>
</dbReference>
<dbReference type="InterPro" id="IPR038019">
    <property type="entry name" value="PRib_AMP_CycHydrolase_sf"/>
</dbReference>
<dbReference type="NCBIfam" id="NF000768">
    <property type="entry name" value="PRK00051.1"/>
    <property type="match status" value="1"/>
</dbReference>
<dbReference type="PANTHER" id="PTHR42945">
    <property type="entry name" value="HISTIDINE BIOSYNTHESIS BIFUNCTIONAL PROTEIN"/>
    <property type="match status" value="1"/>
</dbReference>
<dbReference type="PANTHER" id="PTHR42945:SF1">
    <property type="entry name" value="HISTIDINE BIOSYNTHESIS BIFUNCTIONAL PROTEIN HIS7"/>
    <property type="match status" value="1"/>
</dbReference>
<dbReference type="Pfam" id="PF01502">
    <property type="entry name" value="PRA-CH"/>
    <property type="match status" value="1"/>
</dbReference>
<dbReference type="SUPFAM" id="SSF141734">
    <property type="entry name" value="HisI-like"/>
    <property type="match status" value="1"/>
</dbReference>
<protein>
    <recommendedName>
        <fullName evidence="1">Phosphoribosyl-AMP cyclohydrolase</fullName>
        <shortName evidence="1">PRA-CH</shortName>
        <ecNumber evidence="1">3.5.4.19</ecNumber>
    </recommendedName>
</protein>
<feature type="chain" id="PRO_1000063420" description="Phosphoribosyl-AMP cyclohydrolase">
    <location>
        <begin position="1"/>
        <end position="131"/>
    </location>
</feature>
<feature type="binding site" evidence="1">
    <location>
        <position position="78"/>
    </location>
    <ligand>
        <name>Mg(2+)</name>
        <dbReference type="ChEBI" id="CHEBI:18420"/>
    </ligand>
</feature>
<feature type="binding site" evidence="1">
    <location>
        <position position="79"/>
    </location>
    <ligand>
        <name>Zn(2+)</name>
        <dbReference type="ChEBI" id="CHEBI:29105"/>
        <note>ligand shared between dimeric partners</note>
    </ligand>
</feature>
<feature type="binding site" evidence="1">
    <location>
        <position position="80"/>
    </location>
    <ligand>
        <name>Mg(2+)</name>
        <dbReference type="ChEBI" id="CHEBI:18420"/>
    </ligand>
</feature>
<feature type="binding site" evidence="1">
    <location>
        <position position="82"/>
    </location>
    <ligand>
        <name>Mg(2+)</name>
        <dbReference type="ChEBI" id="CHEBI:18420"/>
    </ligand>
</feature>
<feature type="binding site" evidence="1">
    <location>
        <position position="96"/>
    </location>
    <ligand>
        <name>Zn(2+)</name>
        <dbReference type="ChEBI" id="CHEBI:29105"/>
        <note>ligand shared between dimeric partners</note>
    </ligand>
</feature>
<feature type="binding site" evidence="1">
    <location>
        <position position="103"/>
    </location>
    <ligand>
        <name>Zn(2+)</name>
        <dbReference type="ChEBI" id="CHEBI:29105"/>
        <note>ligand shared between dimeric partners</note>
    </ligand>
</feature>
<organism>
    <name type="scientific">Neisseria meningitidis serogroup C / serotype 2a (strain ATCC 700532 / DSM 15464 / FAM18)</name>
    <dbReference type="NCBI Taxonomy" id="272831"/>
    <lineage>
        <taxon>Bacteria</taxon>
        <taxon>Pseudomonadati</taxon>
        <taxon>Pseudomonadota</taxon>
        <taxon>Betaproteobacteria</taxon>
        <taxon>Neisseriales</taxon>
        <taxon>Neisseriaceae</taxon>
        <taxon>Neisseria</taxon>
    </lineage>
</organism>
<gene>
    <name evidence="1" type="primary">hisI</name>
    <name type="ordered locus">NMC0571</name>
</gene>
<keyword id="KW-0028">Amino-acid biosynthesis</keyword>
<keyword id="KW-0963">Cytoplasm</keyword>
<keyword id="KW-0368">Histidine biosynthesis</keyword>
<keyword id="KW-0378">Hydrolase</keyword>
<keyword id="KW-0460">Magnesium</keyword>
<keyword id="KW-0479">Metal-binding</keyword>
<keyword id="KW-0862">Zinc</keyword>
<sequence length="131" mass="14831">MDKNLLEAVKFDEKGLVCAIAQDAETKRVLMVAWMNAEALQKTVETGFAHYYSRSRQKQWMKGEESGHTQKVRELRLDCDGDAIVMLIAQNGGIACHTGRESCFYKVWRGSAWETADAVLKDEKEIYGSTH</sequence>
<proteinExistence type="inferred from homology"/>